<comment type="function">
    <text evidence="1">Pyridoxal kinase involved in the salvage pathway of pyridoxal 5'-phosphate (PLP). Catalyzes the phosphorylation of pyridoxal to PLP.</text>
</comment>
<comment type="catalytic activity">
    <reaction evidence="1">
        <text>pyridoxal + ATP = pyridoxal 5'-phosphate + ADP + H(+)</text>
        <dbReference type="Rhea" id="RHEA:10224"/>
        <dbReference type="ChEBI" id="CHEBI:15378"/>
        <dbReference type="ChEBI" id="CHEBI:17310"/>
        <dbReference type="ChEBI" id="CHEBI:30616"/>
        <dbReference type="ChEBI" id="CHEBI:456216"/>
        <dbReference type="ChEBI" id="CHEBI:597326"/>
        <dbReference type="EC" id="2.7.1.35"/>
    </reaction>
</comment>
<comment type="cofactor">
    <cofactor evidence="1">
        <name>Mg(2+)</name>
        <dbReference type="ChEBI" id="CHEBI:18420"/>
    </cofactor>
</comment>
<comment type="pathway">
    <text evidence="1">Cofactor metabolism; pyridoxal 5'-phosphate salvage; pyridoxal 5'-phosphate from pyridoxal: step 1/1.</text>
</comment>
<comment type="subunit">
    <text evidence="1">Homodimer.</text>
</comment>
<comment type="similarity">
    <text evidence="1">Belongs to the pyridoxine kinase family. PdxY subfamily.</text>
</comment>
<evidence type="ECO:0000255" key="1">
    <source>
        <dbReference type="HAMAP-Rule" id="MF_01639"/>
    </source>
</evidence>
<reference key="1">
    <citation type="journal article" date="2009" name="Genome Biol.">
        <title>Genomic and genetic analyses of diversity and plant interactions of Pseudomonas fluorescens.</title>
        <authorList>
            <person name="Silby M.W."/>
            <person name="Cerdeno-Tarraga A.M."/>
            <person name="Vernikos G.S."/>
            <person name="Giddens S.R."/>
            <person name="Jackson R.W."/>
            <person name="Preston G.M."/>
            <person name="Zhang X.-X."/>
            <person name="Moon C.D."/>
            <person name="Gehrig S.M."/>
            <person name="Godfrey S.A.C."/>
            <person name="Knight C.G."/>
            <person name="Malone J.G."/>
            <person name="Robinson Z."/>
            <person name="Spiers A.J."/>
            <person name="Harris S."/>
            <person name="Challis G.L."/>
            <person name="Yaxley A.M."/>
            <person name="Harris D."/>
            <person name="Seeger K."/>
            <person name="Murphy L."/>
            <person name="Rutter S."/>
            <person name="Squares R."/>
            <person name="Quail M.A."/>
            <person name="Saunders E."/>
            <person name="Mavromatis K."/>
            <person name="Brettin T.S."/>
            <person name="Bentley S.D."/>
            <person name="Hothersall J."/>
            <person name="Stephens E."/>
            <person name="Thomas C.M."/>
            <person name="Parkhill J."/>
            <person name="Levy S.B."/>
            <person name="Rainey P.B."/>
            <person name="Thomson N.R."/>
        </authorList>
    </citation>
    <scope>NUCLEOTIDE SEQUENCE [LARGE SCALE GENOMIC DNA]</scope>
    <source>
        <strain>SBW25</strain>
    </source>
</reference>
<proteinExistence type="inferred from homology"/>
<name>PDXY_PSEFS</name>
<keyword id="KW-0067">ATP-binding</keyword>
<keyword id="KW-0418">Kinase</keyword>
<keyword id="KW-0460">Magnesium</keyword>
<keyword id="KW-0547">Nucleotide-binding</keyword>
<keyword id="KW-0808">Transferase</keyword>
<sequence length="290" mass="31261">MKRTPHLLAIQSHVVFGHAGNSAAVFPMQRVGVNVWPLNTVQFSNHTQYGQWAGEVLAPQQIPALVEGIAAIGELGNCDAILSGYLGSADQGRAILTGVARIKAINPKALYLCDPVMGHPEKGCIVPQEVSDFLLDEAAAMADFLCPNQLELDSFAGRKPQSLFDCLAMAKALLARGPKAVLVKHLDYPGKLPDGFEILLVTAEGSWHLRRPLLAFARQPVGVGDLTSGLFLARVLLGDSLLAAFEFTAAAVHEVLLETQACASYELELVRAQDRIAHPRVRFEATPIEL</sequence>
<accession>C3K4G7</accession>
<organism>
    <name type="scientific">Pseudomonas fluorescens (strain SBW25)</name>
    <dbReference type="NCBI Taxonomy" id="216595"/>
    <lineage>
        <taxon>Bacteria</taxon>
        <taxon>Pseudomonadati</taxon>
        <taxon>Pseudomonadota</taxon>
        <taxon>Gammaproteobacteria</taxon>
        <taxon>Pseudomonadales</taxon>
        <taxon>Pseudomonadaceae</taxon>
        <taxon>Pseudomonas</taxon>
    </lineage>
</organism>
<dbReference type="EC" id="2.7.1.35" evidence="1"/>
<dbReference type="EMBL" id="AM181176">
    <property type="protein sequence ID" value="CAY53663.1"/>
    <property type="molecule type" value="Genomic_DNA"/>
</dbReference>
<dbReference type="RefSeq" id="WP_015886607.1">
    <property type="nucleotide sequence ID" value="NC_012660.1"/>
</dbReference>
<dbReference type="SMR" id="C3K4G7"/>
<dbReference type="STRING" id="294.SRM1_05798"/>
<dbReference type="PATRIC" id="fig|216595.4.peg.6204"/>
<dbReference type="eggNOG" id="COG2240">
    <property type="taxonomic scope" value="Bacteria"/>
</dbReference>
<dbReference type="HOGENOM" id="CLU_046496_3_0_6"/>
<dbReference type="OrthoDB" id="9800808at2"/>
<dbReference type="UniPathway" id="UPA01068">
    <property type="reaction ID" value="UER00298"/>
</dbReference>
<dbReference type="GO" id="GO:0005829">
    <property type="term" value="C:cytosol"/>
    <property type="evidence" value="ECO:0007669"/>
    <property type="project" value="TreeGrafter"/>
</dbReference>
<dbReference type="GO" id="GO:0005524">
    <property type="term" value="F:ATP binding"/>
    <property type="evidence" value="ECO:0007669"/>
    <property type="project" value="UniProtKB-UniRule"/>
</dbReference>
<dbReference type="GO" id="GO:0000287">
    <property type="term" value="F:magnesium ion binding"/>
    <property type="evidence" value="ECO:0007669"/>
    <property type="project" value="UniProtKB-UniRule"/>
</dbReference>
<dbReference type="GO" id="GO:0008478">
    <property type="term" value="F:pyridoxal kinase activity"/>
    <property type="evidence" value="ECO:0007669"/>
    <property type="project" value="UniProtKB-UniRule"/>
</dbReference>
<dbReference type="GO" id="GO:0009443">
    <property type="term" value="P:pyridoxal 5'-phosphate salvage"/>
    <property type="evidence" value="ECO:0007669"/>
    <property type="project" value="UniProtKB-UniRule"/>
</dbReference>
<dbReference type="CDD" id="cd01173">
    <property type="entry name" value="pyridoxal_pyridoxamine_kinase"/>
    <property type="match status" value="1"/>
</dbReference>
<dbReference type="FunFam" id="3.40.1190.20:FF:000008">
    <property type="entry name" value="Pyridoxal kinase PdxY"/>
    <property type="match status" value="1"/>
</dbReference>
<dbReference type="Gene3D" id="3.40.1190.20">
    <property type="match status" value="1"/>
</dbReference>
<dbReference type="HAMAP" id="MF_01639">
    <property type="entry name" value="PdxY"/>
    <property type="match status" value="1"/>
</dbReference>
<dbReference type="InterPro" id="IPR013749">
    <property type="entry name" value="PM/HMP-P_kinase-1"/>
</dbReference>
<dbReference type="InterPro" id="IPR004625">
    <property type="entry name" value="PyrdxlKinase"/>
</dbReference>
<dbReference type="InterPro" id="IPR023685">
    <property type="entry name" value="Pyridoxal_kinase_PdxY"/>
</dbReference>
<dbReference type="InterPro" id="IPR029056">
    <property type="entry name" value="Ribokinase-like"/>
</dbReference>
<dbReference type="NCBIfam" id="NF004398">
    <property type="entry name" value="PRK05756.1"/>
    <property type="match status" value="1"/>
</dbReference>
<dbReference type="NCBIfam" id="TIGR00687">
    <property type="entry name" value="pyridox_kin"/>
    <property type="match status" value="1"/>
</dbReference>
<dbReference type="PANTHER" id="PTHR10534">
    <property type="entry name" value="PYRIDOXAL KINASE"/>
    <property type="match status" value="1"/>
</dbReference>
<dbReference type="PANTHER" id="PTHR10534:SF2">
    <property type="entry name" value="PYRIDOXAL KINASE"/>
    <property type="match status" value="1"/>
</dbReference>
<dbReference type="Pfam" id="PF08543">
    <property type="entry name" value="Phos_pyr_kin"/>
    <property type="match status" value="1"/>
</dbReference>
<dbReference type="SUPFAM" id="SSF53613">
    <property type="entry name" value="Ribokinase-like"/>
    <property type="match status" value="1"/>
</dbReference>
<gene>
    <name evidence="1" type="primary">pdxY</name>
    <name type="ordered locus">PFLU_6081</name>
</gene>
<protein>
    <recommendedName>
        <fullName evidence="1">Pyridoxal kinase PdxY</fullName>
        <shortName evidence="1">PL kinase</shortName>
        <ecNumber evidence="1">2.7.1.35</ecNumber>
    </recommendedName>
</protein>
<feature type="chain" id="PRO_1000215822" description="Pyridoxal kinase PdxY">
    <location>
        <begin position="1"/>
        <end position="290"/>
    </location>
</feature>
<feature type="binding site" evidence="1">
    <location>
        <position position="12"/>
    </location>
    <ligand>
        <name>substrate</name>
    </ligand>
</feature>
<feature type="binding site" evidence="1">
    <location>
        <begin position="47"/>
        <end position="48"/>
    </location>
    <ligand>
        <name>substrate</name>
    </ligand>
</feature>
<feature type="binding site" evidence="1">
    <location>
        <position position="114"/>
    </location>
    <ligand>
        <name>ATP</name>
        <dbReference type="ChEBI" id="CHEBI:30616"/>
    </ligand>
</feature>
<feature type="binding site" evidence="1">
    <location>
        <position position="151"/>
    </location>
    <ligand>
        <name>ATP</name>
        <dbReference type="ChEBI" id="CHEBI:30616"/>
    </ligand>
</feature>
<feature type="binding site" evidence="1">
    <location>
        <position position="184"/>
    </location>
    <ligand>
        <name>ATP</name>
        <dbReference type="ChEBI" id="CHEBI:30616"/>
    </ligand>
</feature>
<feature type="binding site" evidence="1">
    <location>
        <begin position="211"/>
        <end position="214"/>
    </location>
    <ligand>
        <name>ATP</name>
        <dbReference type="ChEBI" id="CHEBI:30616"/>
    </ligand>
</feature>
<feature type="binding site" evidence="1">
    <location>
        <position position="225"/>
    </location>
    <ligand>
        <name>substrate</name>
    </ligand>
</feature>